<comment type="function">
    <text evidence="4 5 6 7 8">Probable non-functional open reading frame (ORF) of V region of the variable domain of immunoglobulin light chains (PubMed:24600447). Non-functional ORF generally cannot participate in the synthesis of a productive immunoglobulin chain due to altered V-(D)-J or switch recombination and/or splicing site (at mRNA level) and/or conserved amino acid change (protein level) (PubMed:9619395). Immunoglobulins, also known as antibodies, are membrane-bound or secreted glycoproteins produced by B lymphocytes. In the recognition phase of humoral immunity, the membrane-bound immunoglobulins serve as receptors which, upon binding of a specific antigen, trigger the clonal expansion and differentiation of B lymphocytes into immunoglobulins-secreting plasma cells. Secreted immunoglobulins mediate the effector phase of humoral immunity, which results in the elimination of bound antigens (PubMed:20176268, PubMed:22158414). The antigen binding site is formed by the variable domain of one heavy chain, together with that of its associated light chain. Thus, each immunoglobulin has two antigen binding sites with remarkable affinity for a particular antigen. The variable domains are assembled by a process called V-(D)-J rearrangement and can then be subjected to somatic hypermutations which, after exposure to antigen and selection, allow affinity maturation for a particular antigen (PubMed:17576170, PubMed:20176268).</text>
</comment>
<comment type="subunit">
    <text evidence="5 10">Most probably, the immunoglobulin is not assembled due to incorrect folding of light chain (Probable). Immunoglobulins are composed of two identical heavy chains and two identical light chains; disulfide-linked.</text>
</comment>
<comment type="subcellular location">
    <subcellularLocation>
        <location evidence="5 6">Secreted</location>
    </subcellularLocation>
    <subcellularLocation>
        <location evidence="5 6">Cell membrane</location>
    </subcellularLocation>
</comment>
<comment type="polymorphism">
    <text evidence="10">There are several alleles. The sequence shown is that of IMGT allele IGKV1D-37*01.</text>
</comment>
<comment type="caution">
    <text evidence="8 10">Most probably a non-functional protein that cannot participate in the synthesis of a productive immunoglobulin chain due to a mutation at position 110, corresponding to the second cysteine from the disulfide bridge, potentially leading to uncorrect folding (PubMed:9619395).</text>
</comment>
<sequence length="117" mass="12688">MDMRVPAQLLGLLLLWVPGARCDIQLTQSPSSLSASVGDRVTITCRVSQGISSYLNWYRQKPGKVPKLLIYSASNLQSGVPSRFSGSGSGTDFTLTISSLQPEDVATYYGQRTYNAP</sequence>
<evidence type="ECO:0000255" key="1"/>
<evidence type="ECO:0000255" key="2">
    <source>
        <dbReference type="PROSITE-ProRule" id="PRU00114"/>
    </source>
</evidence>
<evidence type="ECO:0000303" key="3">
    <source>
    </source>
</evidence>
<evidence type="ECO:0000303" key="4">
    <source>
    </source>
</evidence>
<evidence type="ECO:0000303" key="5">
    <source>
    </source>
</evidence>
<evidence type="ECO:0000303" key="6">
    <source>
    </source>
</evidence>
<evidence type="ECO:0000303" key="7">
    <source>
    </source>
</evidence>
<evidence type="ECO:0000303" key="8">
    <source>
    </source>
</evidence>
<evidence type="ECO:0000303" key="9">
    <source ref="4"/>
</evidence>
<evidence type="ECO:0000305" key="10"/>
<evidence type="ECO:0000312" key="11">
    <source>
        <dbReference type="HGNC" id="HGNC:5755"/>
    </source>
</evidence>
<protein>
    <recommendedName>
        <fullName evidence="10">Probable non-functional immunoglobulinn kappa variable 1D-37</fullName>
    </recommendedName>
</protein>
<feature type="signal peptide" evidence="1">
    <location>
        <begin position="1"/>
        <end position="22"/>
    </location>
</feature>
<feature type="chain" id="PRO_0000448613" description="Probable non-functional immunoglobulinn kappa variable 1D-37" evidence="1">
    <location>
        <begin position="23"/>
        <end position="117"/>
    </location>
</feature>
<feature type="domain" description="Ig-like" evidence="2">
    <location>
        <begin position="24"/>
        <end position="117" status="greater than"/>
    </location>
</feature>
<feature type="non-terminal residue">
    <location>
        <position position="117"/>
    </location>
</feature>
<reference key="1">
    <citation type="journal article" date="2005" name="Nature">
        <title>Generation and annotation of the DNA sequences of human chromosomes 2 and 4.</title>
        <authorList>
            <person name="Hillier L.W."/>
            <person name="Graves T.A."/>
            <person name="Fulton R.S."/>
            <person name="Fulton L.A."/>
            <person name="Pepin K.H."/>
            <person name="Minx P."/>
            <person name="Wagner-McPherson C."/>
            <person name="Layman D."/>
            <person name="Wylie K."/>
            <person name="Sekhon M."/>
            <person name="Becker M.C."/>
            <person name="Fewell G.A."/>
            <person name="Delehaunty K.D."/>
            <person name="Miner T.L."/>
            <person name="Nash W.E."/>
            <person name="Kremitzki C."/>
            <person name="Oddy L."/>
            <person name="Du H."/>
            <person name="Sun H."/>
            <person name="Bradshaw-Cordum H."/>
            <person name="Ali J."/>
            <person name="Carter J."/>
            <person name="Cordes M."/>
            <person name="Harris A."/>
            <person name="Isak A."/>
            <person name="van Brunt A."/>
            <person name="Nguyen C."/>
            <person name="Du F."/>
            <person name="Courtney L."/>
            <person name="Kalicki J."/>
            <person name="Ozersky P."/>
            <person name="Abbott S."/>
            <person name="Armstrong J."/>
            <person name="Belter E.A."/>
            <person name="Caruso L."/>
            <person name="Cedroni M."/>
            <person name="Cotton M."/>
            <person name="Davidson T."/>
            <person name="Desai A."/>
            <person name="Elliott G."/>
            <person name="Erb T."/>
            <person name="Fronick C."/>
            <person name="Gaige T."/>
            <person name="Haakenson W."/>
            <person name="Haglund K."/>
            <person name="Holmes A."/>
            <person name="Harkins R."/>
            <person name="Kim K."/>
            <person name="Kruchowski S.S."/>
            <person name="Strong C.M."/>
            <person name="Grewal N."/>
            <person name="Goyea E."/>
            <person name="Hou S."/>
            <person name="Levy A."/>
            <person name="Martinka S."/>
            <person name="Mead K."/>
            <person name="McLellan M.D."/>
            <person name="Meyer R."/>
            <person name="Randall-Maher J."/>
            <person name="Tomlinson C."/>
            <person name="Dauphin-Kohlberg S."/>
            <person name="Kozlowicz-Reilly A."/>
            <person name="Shah N."/>
            <person name="Swearengen-Shahid S."/>
            <person name="Snider J."/>
            <person name="Strong J.T."/>
            <person name="Thompson J."/>
            <person name="Yoakum M."/>
            <person name="Leonard S."/>
            <person name="Pearman C."/>
            <person name="Trani L."/>
            <person name="Radionenko M."/>
            <person name="Waligorski J.E."/>
            <person name="Wang C."/>
            <person name="Rock S.M."/>
            <person name="Tin-Wollam A.-M."/>
            <person name="Maupin R."/>
            <person name="Latreille P."/>
            <person name="Wendl M.C."/>
            <person name="Yang S.-P."/>
            <person name="Pohl C."/>
            <person name="Wallis J.W."/>
            <person name="Spieth J."/>
            <person name="Bieri T.A."/>
            <person name="Berkowicz N."/>
            <person name="Nelson J.O."/>
            <person name="Osborne J."/>
            <person name="Ding L."/>
            <person name="Meyer R."/>
            <person name="Sabo A."/>
            <person name="Shotland Y."/>
            <person name="Sinha P."/>
            <person name="Wohldmann P.E."/>
            <person name="Cook L.L."/>
            <person name="Hickenbotham M.T."/>
            <person name="Eldred J."/>
            <person name="Williams D."/>
            <person name="Jones T.A."/>
            <person name="She X."/>
            <person name="Ciccarelli F.D."/>
            <person name="Izaurralde E."/>
            <person name="Taylor J."/>
            <person name="Schmutz J."/>
            <person name="Myers R.M."/>
            <person name="Cox D.R."/>
            <person name="Huang X."/>
            <person name="McPherson J.D."/>
            <person name="Mardis E.R."/>
            <person name="Clifton S.W."/>
            <person name="Warren W.C."/>
            <person name="Chinwalla A.T."/>
            <person name="Eddy S.R."/>
            <person name="Marra M.A."/>
            <person name="Ovcharenko I."/>
            <person name="Furey T.S."/>
            <person name="Miller W."/>
            <person name="Eichler E.E."/>
            <person name="Bork P."/>
            <person name="Suyama M."/>
            <person name="Torrents D."/>
            <person name="Waterston R.H."/>
            <person name="Wilson R.K."/>
        </authorList>
    </citation>
    <scope>NUCLEOTIDE SEQUENCE [LARGE SCALE GENOMIC DNA] (IMGT ALLELE IGKV1D-37*01)</scope>
</reference>
<reference key="2">
    <citation type="journal article" date="1998" name="Exp. Clin. Immunogenet.">
        <title>IMGT (ImMunoGeneTics) locus on focus. A new section of Experimental and Clinical Immunogenetics.</title>
        <authorList>
            <person name="Lefranc M.P."/>
        </authorList>
    </citation>
    <scope>CHARACTERIZATION</scope>
</reference>
<reference key="3">
    <citation type="journal article" date="2001" name="Exp. Clin. Immunogenet.">
        <title>Nomenclature of the human immunoglobulin heavy (IGH) genes.</title>
        <authorList>
            <person name="Lefranc M.P."/>
        </authorList>
    </citation>
    <scope>NOMENCLATURE</scope>
</reference>
<reference key="4">
    <citation type="book" date="2001" name="The Immunoglobulin FactsBook.">
        <title>The Immunoglobulin FactsBook.</title>
        <editorList>
            <person name="Lefranc M.P."/>
            <person name="Lefranc G."/>
        </editorList>
        <authorList>
            <person name="Lefranc M.P."/>
            <person name="Lefranc G."/>
        </authorList>
    </citation>
    <scope>NOMENCLATURE</scope>
</reference>
<reference key="5">
    <citation type="journal article" date="2007" name="Annu. Rev. Genet.">
        <title>Immunoglobulin somatic hypermutation.</title>
        <authorList>
            <person name="Teng G."/>
            <person name="Papavasiliou F.N."/>
        </authorList>
    </citation>
    <scope>REVIEW ON SOMATIC HYPERMUTATION</scope>
</reference>
<reference key="6">
    <citation type="journal article" date="2010" name="J. Allergy Clin. Immunol.">
        <title>Structure and function of immunoglobulins.</title>
        <authorList>
            <person name="Schroeder H.W. Jr."/>
            <person name="Cavacini L."/>
        </authorList>
    </citation>
    <scope>REVIEW ON IMMUNOGLOBULINS</scope>
</reference>
<reference key="7">
    <citation type="journal article" date="2012" name="Nat. Rev. Immunol.">
        <title>Molecular programming of B cell memory.</title>
        <authorList>
            <person name="McHeyzer-Williams M."/>
            <person name="Okitsu S."/>
            <person name="Wang N."/>
            <person name="McHeyzer-Williams L."/>
        </authorList>
    </citation>
    <scope>REVIEW ON FUNCTION</scope>
</reference>
<reference key="8">
    <citation type="journal article" date="2014" name="Front. Immunol.">
        <title>Immunoglobulin and T Cell Receptor Genes: IMGT((R)) and the Birth and Rise of Immunoinformatics.</title>
        <authorList>
            <person name="Lefranc M.P."/>
        </authorList>
    </citation>
    <scope>NOMENCLATURE</scope>
</reference>
<gene>
    <name evidence="3 9 11" type="primary">IGKV1D-37</name>
</gene>
<name>KVD37_HUMAN</name>
<organism>
    <name type="scientific">Homo sapiens</name>
    <name type="common">Human</name>
    <dbReference type="NCBI Taxonomy" id="9606"/>
    <lineage>
        <taxon>Eukaryota</taxon>
        <taxon>Metazoa</taxon>
        <taxon>Chordata</taxon>
        <taxon>Craniata</taxon>
        <taxon>Vertebrata</taxon>
        <taxon>Euteleostomi</taxon>
        <taxon>Mammalia</taxon>
        <taxon>Eutheria</taxon>
        <taxon>Euarchontoglires</taxon>
        <taxon>Primates</taxon>
        <taxon>Haplorrhini</taxon>
        <taxon>Catarrhini</taxon>
        <taxon>Hominidae</taxon>
        <taxon>Homo</taxon>
    </lineage>
</organism>
<proteinExistence type="evidence at protein level"/>
<dbReference type="EMBL" id="AC233264">
    <property type="status" value="NOT_ANNOTATED_CDS"/>
    <property type="molecule type" value="Genomic_DNA"/>
</dbReference>
<dbReference type="SMR" id="P0DSN7"/>
<dbReference type="FunCoup" id="P0DSN7">
    <property type="interactions" value="512"/>
</dbReference>
<dbReference type="jPOST" id="P0DSN7"/>
<dbReference type="MassIVE" id="P0DSN7"/>
<dbReference type="Ensembl" id="ENST00000509129.1">
    <property type="protein sequence ID" value="ENSP00000425962.1"/>
    <property type="gene ID" value="ENSG00000250036.1"/>
</dbReference>
<dbReference type="AGR" id="HGNC:5755"/>
<dbReference type="GeneCards" id="IGKV1D-37"/>
<dbReference type="HGNC" id="HGNC:5755">
    <property type="gene designation" value="IGKV1D-37"/>
</dbReference>
<dbReference type="HPA" id="ENSG00000250036">
    <property type="expression patterns" value="Tissue enhanced (intestine, stomach, urinary bladder)"/>
</dbReference>
<dbReference type="neXtProt" id="NX_P0DSN7"/>
<dbReference type="VEuPathDB" id="HostDB:ENSG00000250036"/>
<dbReference type="GeneTree" id="ENSGT00940000153048"/>
<dbReference type="InParanoid" id="P0DSN7"/>
<dbReference type="OMA" id="WIYCDIQ"/>
<dbReference type="OrthoDB" id="9629570at2759"/>
<dbReference type="PRO" id="PR:P0DSN7"/>
<dbReference type="Proteomes" id="UP000005640">
    <property type="component" value="Chromosome 2"/>
</dbReference>
<dbReference type="Bgee" id="ENSG00000250036">
    <property type="expression patterns" value="Expressed in duodenum and 77 other cell types or tissues"/>
</dbReference>
<dbReference type="GO" id="GO:0005576">
    <property type="term" value="C:extracellular region"/>
    <property type="evidence" value="ECO:0007669"/>
    <property type="project" value="UniProtKB-SubCell"/>
</dbReference>
<dbReference type="GO" id="GO:0019814">
    <property type="term" value="C:immunoglobulin complex"/>
    <property type="evidence" value="ECO:0000318"/>
    <property type="project" value="GO_Central"/>
</dbReference>
<dbReference type="GO" id="GO:0005886">
    <property type="term" value="C:plasma membrane"/>
    <property type="evidence" value="ECO:0007669"/>
    <property type="project" value="UniProtKB-SubCell"/>
</dbReference>
<dbReference type="GO" id="GO:0002250">
    <property type="term" value="P:adaptive immune response"/>
    <property type="evidence" value="ECO:0007669"/>
    <property type="project" value="UniProtKB-KW"/>
</dbReference>
<dbReference type="GO" id="GO:0006955">
    <property type="term" value="P:immune response"/>
    <property type="evidence" value="ECO:0000318"/>
    <property type="project" value="GO_Central"/>
</dbReference>
<dbReference type="FunFam" id="2.60.40.10:FF:000212">
    <property type="entry name" value="Immunoglobulin kappa chain variable 12-38"/>
    <property type="match status" value="1"/>
</dbReference>
<dbReference type="Gene3D" id="2.60.40.10">
    <property type="entry name" value="Immunoglobulins"/>
    <property type="match status" value="1"/>
</dbReference>
<dbReference type="InterPro" id="IPR007110">
    <property type="entry name" value="Ig-like_dom"/>
</dbReference>
<dbReference type="InterPro" id="IPR036179">
    <property type="entry name" value="Ig-like_dom_sf"/>
</dbReference>
<dbReference type="InterPro" id="IPR013783">
    <property type="entry name" value="Ig-like_fold"/>
</dbReference>
<dbReference type="InterPro" id="IPR013106">
    <property type="entry name" value="Ig_V-set"/>
</dbReference>
<dbReference type="InterPro" id="IPR050150">
    <property type="entry name" value="IgV_Light_Chain"/>
</dbReference>
<dbReference type="PANTHER" id="PTHR23267">
    <property type="entry name" value="IMMUNOGLOBULIN LIGHT CHAIN"/>
    <property type="match status" value="1"/>
</dbReference>
<dbReference type="Pfam" id="PF07686">
    <property type="entry name" value="V-set"/>
    <property type="match status" value="1"/>
</dbReference>
<dbReference type="SMART" id="SM00406">
    <property type="entry name" value="IGv"/>
    <property type="match status" value="1"/>
</dbReference>
<dbReference type="SUPFAM" id="SSF48726">
    <property type="entry name" value="Immunoglobulin"/>
    <property type="match status" value="1"/>
</dbReference>
<dbReference type="PROSITE" id="PS50835">
    <property type="entry name" value="IG_LIKE"/>
    <property type="match status" value="1"/>
</dbReference>
<accession>P0DSN7</accession>
<keyword id="KW-1064">Adaptive immunity</keyword>
<keyword id="KW-1003">Cell membrane</keyword>
<keyword id="KW-0391">Immunity</keyword>
<keyword id="KW-1280">Immunoglobulin</keyword>
<keyword id="KW-0393">Immunoglobulin domain</keyword>
<keyword id="KW-0472">Membrane</keyword>
<keyword id="KW-1185">Reference proteome</keyword>
<keyword id="KW-0964">Secreted</keyword>
<keyword id="KW-0732">Signal</keyword>